<gene>
    <name type="primary">REEP5</name>
    <name type="synonym">DP1</name>
</gene>
<proteinExistence type="evidence at transcript level"/>
<evidence type="ECO:0000250" key="1">
    <source>
        <dbReference type="UniProtKB" id="Q00765"/>
    </source>
</evidence>
<evidence type="ECO:0000250" key="2">
    <source>
        <dbReference type="UniProtKB" id="Q60870"/>
    </source>
</evidence>
<evidence type="ECO:0000255" key="3"/>
<evidence type="ECO:0000305" key="4"/>
<protein>
    <recommendedName>
        <fullName>Receptor expression-enhancing protein 5</fullName>
    </recommendedName>
    <alternativeName>
        <fullName>Polyposis locus protein 1 homolog</fullName>
    </alternativeName>
</protein>
<dbReference type="EMBL" id="CR857705">
    <property type="protein sequence ID" value="CAH89974.1"/>
    <property type="molecule type" value="mRNA"/>
</dbReference>
<dbReference type="RefSeq" id="NP_001127218.1">
    <property type="nucleotide sequence ID" value="NM_001133746.1"/>
</dbReference>
<dbReference type="SMR" id="Q5RE33"/>
<dbReference type="FunCoup" id="Q5RE33">
    <property type="interactions" value="1294"/>
</dbReference>
<dbReference type="STRING" id="9601.ENSPPYP00000017541"/>
<dbReference type="Ensembl" id="ENSPPYT00000018250.3">
    <property type="protein sequence ID" value="ENSPPYP00000017541.3"/>
    <property type="gene ID" value="ENSPPYG00000015687.3"/>
</dbReference>
<dbReference type="GeneID" id="100174273"/>
<dbReference type="KEGG" id="pon:100174273"/>
<dbReference type="CTD" id="7905"/>
<dbReference type="eggNOG" id="KOG1725">
    <property type="taxonomic scope" value="Eukaryota"/>
</dbReference>
<dbReference type="GeneTree" id="ENSGT00940000157873"/>
<dbReference type="InParanoid" id="Q5RE33"/>
<dbReference type="OrthoDB" id="10009287at2759"/>
<dbReference type="Proteomes" id="UP000001595">
    <property type="component" value="Chromosome 5"/>
</dbReference>
<dbReference type="GO" id="GO:0071782">
    <property type="term" value="C:endoplasmic reticulum tubular network"/>
    <property type="evidence" value="ECO:0000250"/>
    <property type="project" value="UniProtKB"/>
</dbReference>
<dbReference type="GO" id="GO:0033017">
    <property type="term" value="C:sarcoplasmic reticulum membrane"/>
    <property type="evidence" value="ECO:0007669"/>
    <property type="project" value="UniProtKB-SubCell"/>
</dbReference>
<dbReference type="GO" id="GO:0090158">
    <property type="term" value="P:endoplasmic reticulum membrane organization"/>
    <property type="evidence" value="ECO:0000250"/>
    <property type="project" value="UniProtKB"/>
</dbReference>
<dbReference type="InterPro" id="IPR004345">
    <property type="entry name" value="TB2_DP1_HVA22"/>
</dbReference>
<dbReference type="PANTHER" id="PTHR12300">
    <property type="entry name" value="HVA22-LIKE PROTEINS"/>
    <property type="match status" value="1"/>
</dbReference>
<dbReference type="PANTHER" id="PTHR12300:SF93">
    <property type="entry name" value="RECEPTOR EXPRESSION-ENHANCING PROTEIN 5"/>
    <property type="match status" value="1"/>
</dbReference>
<dbReference type="Pfam" id="PF03134">
    <property type="entry name" value="TB2_DP1_HVA22"/>
    <property type="match status" value="1"/>
</dbReference>
<keyword id="KW-0256">Endoplasmic reticulum</keyword>
<keyword id="KW-0472">Membrane</keyword>
<keyword id="KW-1185">Reference proteome</keyword>
<keyword id="KW-0703">Sarcoplasmic reticulum</keyword>
<keyword id="KW-0812">Transmembrane</keyword>
<keyword id="KW-1133">Transmembrane helix</keyword>
<organism>
    <name type="scientific">Pongo abelii</name>
    <name type="common">Sumatran orangutan</name>
    <name type="synonym">Pongo pygmaeus abelii</name>
    <dbReference type="NCBI Taxonomy" id="9601"/>
    <lineage>
        <taxon>Eukaryota</taxon>
        <taxon>Metazoa</taxon>
        <taxon>Chordata</taxon>
        <taxon>Craniata</taxon>
        <taxon>Vertebrata</taxon>
        <taxon>Euteleostomi</taxon>
        <taxon>Mammalia</taxon>
        <taxon>Eutheria</taxon>
        <taxon>Euarchontoglires</taxon>
        <taxon>Primates</taxon>
        <taxon>Haplorrhini</taxon>
        <taxon>Catarrhini</taxon>
        <taxon>Hominidae</taxon>
        <taxon>Pongo</taxon>
    </lineage>
</organism>
<sequence length="189" mass="21461">MSAAMRERFDRFLHEKNCMTDLLAKLEAKTGVNRSFIALGVIGLVALYLVFGYGASLLCNLIGFGYPAYISIKAIESPNKEDDTQWLTYWVVYGVFSIAEFFSDIFLSWFPFYYMLKCGFLLWCMAPSPSNGAELLYKRIIRPFFLKHESQVDSVVKDLKDKAKETADAITKEAKKATVNLLGEEKKST</sequence>
<comment type="function">
    <text evidence="2">Plays an essential role in heart function and development by regulating the organization and function of the sarcoplasmic reticulum in cardiomyocytes.</text>
</comment>
<comment type="subunit">
    <text evidence="2">Monomer (heart, ventricle). Homodimer (atria, kidney, intestine); maybe disulfide-linked. Homotrimer (heart, ventricle, skeletal muscle, liver). Interacts with ATL1. Interacts with ATL2. Interacts with ATL3. Interacts with CKAP4. Interacts with RTN4. Interacts with ZFYVE27.</text>
</comment>
<comment type="subcellular location">
    <subcellularLocation>
        <location evidence="2">Endoplasmic reticulum membrane</location>
        <topology evidence="3">Multi-pass membrane protein</topology>
    </subcellularLocation>
    <subcellularLocation>
        <location evidence="2">Sarcoplasmic reticulum membrane</location>
        <topology evidence="3">Multi-pass membrane protein</topology>
    </subcellularLocation>
    <text evidence="2">Localizes to endoplasmic reticulum tubular network. In cardiomyocytes, localizes to the junctional sarcoplasmic reticulum membrane which is closely tethered to the cell membrane and contractile machinery.</text>
</comment>
<comment type="domain">
    <text evidence="1">The short lumenal loops between transmembrane domains 1 and 2 and between transmembrane domains 3 and 4 may impart a wedge-like configuration, thus deforming membranes.</text>
</comment>
<comment type="similarity">
    <text evidence="4">Belongs to the DP1 family.</text>
</comment>
<name>REEP5_PONAB</name>
<accession>Q5RE33</accession>
<reference key="1">
    <citation type="submission" date="2004-11" db="EMBL/GenBank/DDBJ databases">
        <authorList>
            <consortium name="The German cDNA consortium"/>
        </authorList>
    </citation>
    <scope>NUCLEOTIDE SEQUENCE [LARGE SCALE MRNA]</scope>
    <source>
        <tissue>Brain cortex</tissue>
    </source>
</reference>
<feature type="chain" id="PRO_0000101817" description="Receptor expression-enhancing protein 5">
    <location>
        <begin position="1"/>
        <end position="189"/>
    </location>
</feature>
<feature type="topological domain" description="Cytoplasmic" evidence="1">
    <location>
        <begin position="1"/>
        <end position="34"/>
    </location>
</feature>
<feature type="transmembrane region" description="Helical" evidence="1">
    <location>
        <begin position="35"/>
        <end position="51"/>
    </location>
</feature>
<feature type="topological domain" description="Lumenal" evidence="1">
    <location>
        <begin position="52"/>
        <end position="53"/>
    </location>
</feature>
<feature type="transmembrane region" description="Helical" evidence="1">
    <location>
        <begin position="54"/>
        <end position="74"/>
    </location>
</feature>
<feature type="topological domain" description="Cytoplasmic" evidence="1">
    <location>
        <begin position="75"/>
        <end position="84"/>
    </location>
</feature>
<feature type="transmembrane region" description="Helical" evidence="1">
    <location>
        <begin position="85"/>
        <end position="103"/>
    </location>
</feature>
<feature type="topological domain" description="Lumenal" evidence="1">
    <location>
        <begin position="104"/>
        <end position="105"/>
    </location>
</feature>
<feature type="transmembrane region" description="Helical" evidence="1">
    <location>
        <begin position="106"/>
        <end position="123"/>
    </location>
</feature>
<feature type="topological domain" description="Cytoplasmic" evidence="1">
    <location>
        <begin position="124"/>
        <end position="189"/>
    </location>
</feature>
<feature type="region of interest" description="Required for dimerization and maintaining endoplasmic reticulum morphology" evidence="1">
    <location>
        <begin position="114"/>
        <end position="185"/>
    </location>
</feature>